<proteinExistence type="inferred from homology"/>
<feature type="signal peptide" evidence="2">
    <location>
        <begin position="1"/>
        <end position="20"/>
    </location>
</feature>
<feature type="chain" id="PRO_0000403877" description="Anionic peptide 10.1">
    <location>
        <begin position="21"/>
        <end position="63"/>
    </location>
</feature>
<keyword id="KW-0964">Secreted</keyword>
<keyword id="KW-0732">Signal</keyword>
<sequence>MISRFCLLFLLVFVVSKIQAVEDFNEENEVDDLDDLDFLDDLDLDLSPEELEYLENWAKEFED</sequence>
<dbReference type="EMBL" id="GT028615">
    <property type="status" value="NOT_ANNOTATED_CDS"/>
    <property type="molecule type" value="mRNA"/>
</dbReference>
<dbReference type="GO" id="GO:0005576">
    <property type="term" value="C:extracellular region"/>
    <property type="evidence" value="ECO:0007669"/>
    <property type="project" value="UniProtKB-SubCell"/>
</dbReference>
<name>NDBO_LYCMC</name>
<comment type="subcellular location">
    <subcellularLocation>
        <location evidence="1">Secreted</location>
    </subcellularLocation>
</comment>
<comment type="tissue specificity">
    <text evidence="3">Expressed by the venom gland.</text>
</comment>
<comment type="similarity">
    <text evidence="3">Belongs to the non-disulfide-bridged peptide (NDBP) superfamily. Long chain multifunctional peptide (group 2) family.</text>
</comment>
<reference key="1">
    <citation type="journal article" date="2010" name="BMC Genomics">
        <title>Comparative venom gland transcriptome analysis of the scorpion Lychas mucronatus reveals intraspecific toxic gene diversity and new venomous components.</title>
        <authorList>
            <person name="Zhao R."/>
            <person name="Ma Y."/>
            <person name="He Y."/>
            <person name="Di Z."/>
            <person name="Wu Y.-L."/>
            <person name="Cao Z.-J."/>
            <person name="Li W.-X."/>
        </authorList>
    </citation>
    <scope>NUCLEOTIDE SEQUENCE [MRNA]</scope>
    <source>
        <strain>Yunnan</strain>
        <tissue>Venom gland</tissue>
    </source>
</reference>
<organism>
    <name type="scientific">Lychas mucronatus</name>
    <name type="common">Chinese swimming scorpion</name>
    <dbReference type="NCBI Taxonomy" id="172552"/>
    <lineage>
        <taxon>Eukaryota</taxon>
        <taxon>Metazoa</taxon>
        <taxon>Ecdysozoa</taxon>
        <taxon>Arthropoda</taxon>
        <taxon>Chelicerata</taxon>
        <taxon>Arachnida</taxon>
        <taxon>Scorpiones</taxon>
        <taxon>Buthida</taxon>
        <taxon>Buthoidea</taxon>
        <taxon>Buthidae</taxon>
        <taxon>Lychas</taxon>
    </lineage>
</organism>
<evidence type="ECO:0000250" key="1"/>
<evidence type="ECO:0000255" key="2"/>
<evidence type="ECO:0000305" key="3"/>
<protein>
    <recommendedName>
        <fullName>Anionic peptide 10.1</fullName>
    </recommendedName>
</protein>
<accession>P0CI97</accession>